<organism>
    <name type="scientific">Xanthomonas campestris pv. campestris (strain ATCC 33913 / DSM 3586 / NCPPB 528 / LMG 568 / P 25)</name>
    <dbReference type="NCBI Taxonomy" id="190485"/>
    <lineage>
        <taxon>Bacteria</taxon>
        <taxon>Pseudomonadati</taxon>
        <taxon>Pseudomonadota</taxon>
        <taxon>Gammaproteobacteria</taxon>
        <taxon>Lysobacterales</taxon>
        <taxon>Lysobacteraceae</taxon>
        <taxon>Xanthomonas</taxon>
    </lineage>
</organism>
<reference key="1">
    <citation type="journal article" date="2002" name="Nature">
        <title>Comparison of the genomes of two Xanthomonas pathogens with differing host specificities.</title>
        <authorList>
            <person name="da Silva A.C.R."/>
            <person name="Ferro J.A."/>
            <person name="Reinach F.C."/>
            <person name="Farah C.S."/>
            <person name="Furlan L.R."/>
            <person name="Quaggio R.B."/>
            <person name="Monteiro-Vitorello C.B."/>
            <person name="Van Sluys M.A."/>
            <person name="Almeida N.F. Jr."/>
            <person name="Alves L.M.C."/>
            <person name="do Amaral A.M."/>
            <person name="Bertolini M.C."/>
            <person name="Camargo L.E.A."/>
            <person name="Camarotte G."/>
            <person name="Cannavan F."/>
            <person name="Cardozo J."/>
            <person name="Chambergo F."/>
            <person name="Ciapina L.P."/>
            <person name="Cicarelli R.M.B."/>
            <person name="Coutinho L.L."/>
            <person name="Cursino-Santos J.R."/>
            <person name="El-Dorry H."/>
            <person name="Faria J.B."/>
            <person name="Ferreira A.J.S."/>
            <person name="Ferreira R.C.C."/>
            <person name="Ferro M.I.T."/>
            <person name="Formighieri E.F."/>
            <person name="Franco M.C."/>
            <person name="Greggio C.C."/>
            <person name="Gruber A."/>
            <person name="Katsuyama A.M."/>
            <person name="Kishi L.T."/>
            <person name="Leite R.P."/>
            <person name="Lemos E.G.M."/>
            <person name="Lemos M.V.F."/>
            <person name="Locali E.C."/>
            <person name="Machado M.A."/>
            <person name="Madeira A.M.B.N."/>
            <person name="Martinez-Rossi N.M."/>
            <person name="Martins E.C."/>
            <person name="Meidanis J."/>
            <person name="Menck C.F.M."/>
            <person name="Miyaki C.Y."/>
            <person name="Moon D.H."/>
            <person name="Moreira L.M."/>
            <person name="Novo M.T.M."/>
            <person name="Okura V.K."/>
            <person name="Oliveira M.C."/>
            <person name="Oliveira V.R."/>
            <person name="Pereira H.A."/>
            <person name="Rossi A."/>
            <person name="Sena J.A.D."/>
            <person name="Silva C."/>
            <person name="de Souza R.F."/>
            <person name="Spinola L.A.F."/>
            <person name="Takita M.A."/>
            <person name="Tamura R.E."/>
            <person name="Teixeira E.C."/>
            <person name="Tezza R.I.D."/>
            <person name="Trindade dos Santos M."/>
            <person name="Truffi D."/>
            <person name="Tsai S.M."/>
            <person name="White F.F."/>
            <person name="Setubal J.C."/>
            <person name="Kitajima J.P."/>
        </authorList>
    </citation>
    <scope>NUCLEOTIDE SEQUENCE [LARGE SCALE GENOMIC DNA]</scope>
    <source>
        <strain>ATCC 33913 / DSM 3586 / NCPPB 528 / LMG 568 / P 25</strain>
    </source>
</reference>
<proteinExistence type="inferred from homology"/>
<gene>
    <name evidence="1" type="primary">fmt</name>
    <name type="ordered locus">XCC3748</name>
</gene>
<evidence type="ECO:0000255" key="1">
    <source>
        <dbReference type="HAMAP-Rule" id="MF_00182"/>
    </source>
</evidence>
<feature type="chain" id="PRO_0000083089" description="Methionyl-tRNA formyltransferase">
    <location>
        <begin position="1"/>
        <end position="307"/>
    </location>
</feature>
<feature type="binding site" evidence="1">
    <location>
        <begin position="108"/>
        <end position="111"/>
    </location>
    <ligand>
        <name>(6S)-5,6,7,8-tetrahydrofolate</name>
        <dbReference type="ChEBI" id="CHEBI:57453"/>
    </ligand>
</feature>
<keyword id="KW-0648">Protein biosynthesis</keyword>
<keyword id="KW-1185">Reference proteome</keyword>
<keyword id="KW-0808">Transferase</keyword>
<comment type="function">
    <text evidence="1">Attaches a formyl group to the free amino group of methionyl-tRNA(fMet). The formyl group appears to play a dual role in the initiator identity of N-formylmethionyl-tRNA by promoting its recognition by IF2 and preventing the misappropriation of this tRNA by the elongation apparatus.</text>
</comment>
<comment type="catalytic activity">
    <reaction evidence="1">
        <text>L-methionyl-tRNA(fMet) + (6R)-10-formyltetrahydrofolate = N-formyl-L-methionyl-tRNA(fMet) + (6S)-5,6,7,8-tetrahydrofolate + H(+)</text>
        <dbReference type="Rhea" id="RHEA:24380"/>
        <dbReference type="Rhea" id="RHEA-COMP:9952"/>
        <dbReference type="Rhea" id="RHEA-COMP:9953"/>
        <dbReference type="ChEBI" id="CHEBI:15378"/>
        <dbReference type="ChEBI" id="CHEBI:57453"/>
        <dbReference type="ChEBI" id="CHEBI:78530"/>
        <dbReference type="ChEBI" id="CHEBI:78844"/>
        <dbReference type="ChEBI" id="CHEBI:195366"/>
        <dbReference type="EC" id="2.1.2.9"/>
    </reaction>
</comment>
<comment type="similarity">
    <text evidence="1">Belongs to the Fmt family.</text>
</comment>
<dbReference type="EC" id="2.1.2.9" evidence="1"/>
<dbReference type="EMBL" id="AE008922">
    <property type="protein sequence ID" value="AAM43005.1"/>
    <property type="molecule type" value="Genomic_DNA"/>
</dbReference>
<dbReference type="RefSeq" id="NP_639093.1">
    <property type="nucleotide sequence ID" value="NC_003902.1"/>
</dbReference>
<dbReference type="RefSeq" id="WP_011038830.1">
    <property type="nucleotide sequence ID" value="NC_003902.1"/>
</dbReference>
<dbReference type="SMR" id="Q8P4G0"/>
<dbReference type="STRING" id="190485.XCC3748"/>
<dbReference type="EnsemblBacteria" id="AAM43005">
    <property type="protein sequence ID" value="AAM43005"/>
    <property type="gene ID" value="XCC3748"/>
</dbReference>
<dbReference type="KEGG" id="xcc:XCC3748"/>
<dbReference type="PATRIC" id="fig|190485.4.peg.4009"/>
<dbReference type="eggNOG" id="COG0223">
    <property type="taxonomic scope" value="Bacteria"/>
</dbReference>
<dbReference type="HOGENOM" id="CLU_033347_1_2_6"/>
<dbReference type="OrthoDB" id="9802815at2"/>
<dbReference type="Proteomes" id="UP000001010">
    <property type="component" value="Chromosome"/>
</dbReference>
<dbReference type="GO" id="GO:0005829">
    <property type="term" value="C:cytosol"/>
    <property type="evidence" value="ECO:0000318"/>
    <property type="project" value="GO_Central"/>
</dbReference>
<dbReference type="GO" id="GO:0004479">
    <property type="term" value="F:methionyl-tRNA formyltransferase activity"/>
    <property type="evidence" value="ECO:0000318"/>
    <property type="project" value="GO_Central"/>
</dbReference>
<dbReference type="GO" id="GO:0071951">
    <property type="term" value="P:conversion of methionyl-tRNA to N-formyl-methionyl-tRNA"/>
    <property type="evidence" value="ECO:0000318"/>
    <property type="project" value="GO_Central"/>
</dbReference>
<dbReference type="CDD" id="cd08646">
    <property type="entry name" value="FMT_core_Met-tRNA-FMT_N"/>
    <property type="match status" value="1"/>
</dbReference>
<dbReference type="CDD" id="cd08704">
    <property type="entry name" value="Met_tRNA_FMT_C"/>
    <property type="match status" value="1"/>
</dbReference>
<dbReference type="FunFam" id="3.40.50.12230:FF:000001">
    <property type="entry name" value="Methionyl-tRNA formyltransferase"/>
    <property type="match status" value="1"/>
</dbReference>
<dbReference type="FunFam" id="3.40.50.170:FF:000003">
    <property type="entry name" value="Methionyl-tRNA formyltransferase"/>
    <property type="match status" value="1"/>
</dbReference>
<dbReference type="Gene3D" id="3.10.25.10">
    <property type="entry name" value="Formyl transferase, C-terminal domain"/>
    <property type="match status" value="1"/>
</dbReference>
<dbReference type="Gene3D" id="3.40.50.170">
    <property type="entry name" value="Formyl transferase, N-terminal domain"/>
    <property type="match status" value="1"/>
</dbReference>
<dbReference type="HAMAP" id="MF_00182">
    <property type="entry name" value="Formyl_trans"/>
    <property type="match status" value="1"/>
</dbReference>
<dbReference type="InterPro" id="IPR005794">
    <property type="entry name" value="Fmt"/>
</dbReference>
<dbReference type="InterPro" id="IPR005793">
    <property type="entry name" value="Formyl_trans_C"/>
</dbReference>
<dbReference type="InterPro" id="IPR037022">
    <property type="entry name" value="Formyl_trans_C_sf"/>
</dbReference>
<dbReference type="InterPro" id="IPR002376">
    <property type="entry name" value="Formyl_transf_N"/>
</dbReference>
<dbReference type="InterPro" id="IPR036477">
    <property type="entry name" value="Formyl_transf_N_sf"/>
</dbReference>
<dbReference type="InterPro" id="IPR011034">
    <property type="entry name" value="Formyl_transferase-like_C_sf"/>
</dbReference>
<dbReference type="InterPro" id="IPR001555">
    <property type="entry name" value="GART_AS"/>
</dbReference>
<dbReference type="InterPro" id="IPR044135">
    <property type="entry name" value="Met-tRNA-FMT_C"/>
</dbReference>
<dbReference type="InterPro" id="IPR041711">
    <property type="entry name" value="Met-tRNA-FMT_N"/>
</dbReference>
<dbReference type="NCBIfam" id="TIGR00460">
    <property type="entry name" value="fmt"/>
    <property type="match status" value="1"/>
</dbReference>
<dbReference type="PANTHER" id="PTHR11138">
    <property type="entry name" value="METHIONYL-TRNA FORMYLTRANSFERASE"/>
    <property type="match status" value="1"/>
</dbReference>
<dbReference type="PANTHER" id="PTHR11138:SF5">
    <property type="entry name" value="METHIONYL-TRNA FORMYLTRANSFERASE, MITOCHONDRIAL"/>
    <property type="match status" value="1"/>
</dbReference>
<dbReference type="Pfam" id="PF02911">
    <property type="entry name" value="Formyl_trans_C"/>
    <property type="match status" value="1"/>
</dbReference>
<dbReference type="Pfam" id="PF00551">
    <property type="entry name" value="Formyl_trans_N"/>
    <property type="match status" value="1"/>
</dbReference>
<dbReference type="SUPFAM" id="SSF50486">
    <property type="entry name" value="FMT C-terminal domain-like"/>
    <property type="match status" value="1"/>
</dbReference>
<dbReference type="SUPFAM" id="SSF53328">
    <property type="entry name" value="Formyltransferase"/>
    <property type="match status" value="1"/>
</dbReference>
<dbReference type="PROSITE" id="PS00373">
    <property type="entry name" value="GART"/>
    <property type="match status" value="1"/>
</dbReference>
<sequence>MRIVFAGTPDFAVASLRAAAQRHEVVAVYTQPDRPAGRGRGLTPSPVKLDAIARGIPVFQPQTLRSPEALATLRALQPDLMVVVAYGLILPKAVLAAPTHGCWNVHASLLPRWRGAAPIQRAIEAGDTETGVCLMQMEAGLDTGPVLLSQRVEIGEQETGGQLHDRLAALGAQVLSDGLGLLRAGIRPVAQPQPAEGVTYAHKLDKAQARLDWAQPAEELARRVRAFNPWPVAEAILAGERVRLHGAVALDLAHQQAPGTLLAASKQGIDIACGQGALRVRVLQREGGKAITAADYLNARRDLPALR</sequence>
<name>FMT_XANCP</name>
<accession>Q8P4G0</accession>
<protein>
    <recommendedName>
        <fullName evidence="1">Methionyl-tRNA formyltransferase</fullName>
        <ecNumber evidence="1">2.1.2.9</ecNumber>
    </recommendedName>
</protein>